<reference key="1">
    <citation type="submission" date="2005-08" db="EMBL/GenBank/DDBJ databases">
        <title>Complete sequence of Pelodictyon luteolum DSM 273.</title>
        <authorList>
            <consortium name="US DOE Joint Genome Institute"/>
            <person name="Copeland A."/>
            <person name="Lucas S."/>
            <person name="Lapidus A."/>
            <person name="Barry K."/>
            <person name="Detter J.C."/>
            <person name="Glavina T."/>
            <person name="Hammon N."/>
            <person name="Israni S."/>
            <person name="Pitluck S."/>
            <person name="Bryant D."/>
            <person name="Schmutz J."/>
            <person name="Larimer F."/>
            <person name="Land M."/>
            <person name="Kyrpides N."/>
            <person name="Ivanova N."/>
            <person name="Richardson P."/>
        </authorList>
    </citation>
    <scope>NUCLEOTIDE SEQUENCE [LARGE SCALE GENOMIC DNA]</scope>
    <source>
        <strain>DSM 273 / BCRC 81028 / 2530</strain>
    </source>
</reference>
<comment type="function">
    <text evidence="1">Catalyzes the N-acylation of UDP-3-O-acylglucosamine using 3-hydroxyacyl-ACP as the acyl donor. Is involved in the biosynthesis of lipid A, a phosphorylated glycolipid that anchors the lipopolysaccharide to the outer membrane of the cell.</text>
</comment>
<comment type="catalytic activity">
    <reaction evidence="1">
        <text>a UDP-3-O-[(3R)-3-hydroxyacyl]-alpha-D-glucosamine + a (3R)-hydroxyacyl-[ACP] = a UDP-2-N,3-O-bis[(3R)-3-hydroxyacyl]-alpha-D-glucosamine + holo-[ACP] + H(+)</text>
        <dbReference type="Rhea" id="RHEA:53836"/>
        <dbReference type="Rhea" id="RHEA-COMP:9685"/>
        <dbReference type="Rhea" id="RHEA-COMP:9945"/>
        <dbReference type="ChEBI" id="CHEBI:15378"/>
        <dbReference type="ChEBI" id="CHEBI:64479"/>
        <dbReference type="ChEBI" id="CHEBI:78827"/>
        <dbReference type="ChEBI" id="CHEBI:137740"/>
        <dbReference type="ChEBI" id="CHEBI:137748"/>
        <dbReference type="EC" id="2.3.1.191"/>
    </reaction>
</comment>
<comment type="pathway">
    <text evidence="1">Bacterial outer membrane biogenesis; LPS lipid A biosynthesis.</text>
</comment>
<comment type="subunit">
    <text evidence="1">Homotrimer.</text>
</comment>
<comment type="similarity">
    <text evidence="1">Belongs to the transferase hexapeptide repeat family. LpxD subfamily.</text>
</comment>
<protein>
    <recommendedName>
        <fullName evidence="1">UDP-3-O-acylglucosamine N-acyltransferase</fullName>
        <ecNumber evidence="1">2.3.1.191</ecNumber>
    </recommendedName>
</protein>
<keyword id="KW-0012">Acyltransferase</keyword>
<keyword id="KW-0441">Lipid A biosynthesis</keyword>
<keyword id="KW-0444">Lipid biosynthesis</keyword>
<keyword id="KW-0443">Lipid metabolism</keyword>
<keyword id="KW-1185">Reference proteome</keyword>
<keyword id="KW-0677">Repeat</keyword>
<keyword id="KW-0808">Transferase</keyword>
<proteinExistence type="inferred from homology"/>
<feature type="chain" id="PRO_0000264404" description="UDP-3-O-acylglucosamine N-acyltransferase">
    <location>
        <begin position="1"/>
        <end position="352"/>
    </location>
</feature>
<feature type="active site" description="Proton acceptor" evidence="1">
    <location>
        <position position="246"/>
    </location>
</feature>
<gene>
    <name evidence="1" type="primary">lpxD</name>
    <name type="ordered locus">Plut_1340</name>
</gene>
<sequence length="352" mass="37078">MTIQEIRQYLTQFFDPVELVGEGDAVIAGPAKIESAARGEVSFIANEKYLRYLSLTSASLVIVHRSVDVSLYAGERSFLKVSDPYTAFVFVLQKFARPRTLAKPGVAPTAAIGGGVSLGEGVAVGEHAVIGDRCSIGAGTVIAPNAVIMHDVKIGEGCTIFPQVTIYDGTLIGDRVVIHAGSVIGADGFGFAPQPDGSYVKIPQMGVVEIGDDAEIGANATIDRATMGSTVIAKGVKVDNLVQVAHNCRIGEHTVIAAQAGISGSTIMGRGCMIGGQAGFAGHLELADRTHVAAQAGVSKSFLEPGTALRGYPAQPMREQLRHEAMLRHLGSMKEKIDRIDRELKEQGASRD</sequence>
<evidence type="ECO:0000255" key="1">
    <source>
        <dbReference type="HAMAP-Rule" id="MF_00523"/>
    </source>
</evidence>
<accession>Q3B382</accession>
<name>LPXD_CHLL3</name>
<organism>
    <name type="scientific">Chlorobium luteolum (strain DSM 273 / BCRC 81028 / 2530)</name>
    <name type="common">Pelodictyon luteolum</name>
    <dbReference type="NCBI Taxonomy" id="319225"/>
    <lineage>
        <taxon>Bacteria</taxon>
        <taxon>Pseudomonadati</taxon>
        <taxon>Chlorobiota</taxon>
        <taxon>Chlorobiia</taxon>
        <taxon>Chlorobiales</taxon>
        <taxon>Chlorobiaceae</taxon>
        <taxon>Chlorobium/Pelodictyon group</taxon>
        <taxon>Pelodictyon</taxon>
    </lineage>
</organism>
<dbReference type="EC" id="2.3.1.191" evidence="1"/>
<dbReference type="EMBL" id="CP000096">
    <property type="protein sequence ID" value="ABB24199.1"/>
    <property type="molecule type" value="Genomic_DNA"/>
</dbReference>
<dbReference type="RefSeq" id="WP_011358071.1">
    <property type="nucleotide sequence ID" value="NC_007512.1"/>
</dbReference>
<dbReference type="SMR" id="Q3B382"/>
<dbReference type="STRING" id="319225.Plut_1340"/>
<dbReference type="KEGG" id="plt:Plut_1340"/>
<dbReference type="eggNOG" id="COG1044">
    <property type="taxonomic scope" value="Bacteria"/>
</dbReference>
<dbReference type="HOGENOM" id="CLU_049865_0_0_10"/>
<dbReference type="OrthoDB" id="9784739at2"/>
<dbReference type="UniPathway" id="UPA00973"/>
<dbReference type="Proteomes" id="UP000002709">
    <property type="component" value="Chromosome"/>
</dbReference>
<dbReference type="GO" id="GO:0016020">
    <property type="term" value="C:membrane"/>
    <property type="evidence" value="ECO:0007669"/>
    <property type="project" value="GOC"/>
</dbReference>
<dbReference type="GO" id="GO:0016410">
    <property type="term" value="F:N-acyltransferase activity"/>
    <property type="evidence" value="ECO:0007669"/>
    <property type="project" value="InterPro"/>
</dbReference>
<dbReference type="GO" id="GO:0009245">
    <property type="term" value="P:lipid A biosynthetic process"/>
    <property type="evidence" value="ECO:0007669"/>
    <property type="project" value="UniProtKB-UniRule"/>
</dbReference>
<dbReference type="CDD" id="cd03352">
    <property type="entry name" value="LbH_LpxD"/>
    <property type="match status" value="1"/>
</dbReference>
<dbReference type="Gene3D" id="2.160.10.10">
    <property type="entry name" value="Hexapeptide repeat proteins"/>
    <property type="match status" value="1"/>
</dbReference>
<dbReference type="Gene3D" id="3.40.1390.10">
    <property type="entry name" value="MurE/MurF, N-terminal domain"/>
    <property type="match status" value="1"/>
</dbReference>
<dbReference type="HAMAP" id="MF_00523">
    <property type="entry name" value="LpxD"/>
    <property type="match status" value="1"/>
</dbReference>
<dbReference type="InterPro" id="IPR001451">
    <property type="entry name" value="Hexapep"/>
</dbReference>
<dbReference type="InterPro" id="IPR018357">
    <property type="entry name" value="Hexapep_transf_CS"/>
</dbReference>
<dbReference type="InterPro" id="IPR007691">
    <property type="entry name" value="LpxD"/>
</dbReference>
<dbReference type="InterPro" id="IPR011004">
    <property type="entry name" value="Trimer_LpxA-like_sf"/>
</dbReference>
<dbReference type="InterPro" id="IPR020573">
    <property type="entry name" value="UDP_GlcNAc_AcTrfase_non-rep"/>
</dbReference>
<dbReference type="NCBIfam" id="TIGR01853">
    <property type="entry name" value="lipid_A_lpxD"/>
    <property type="match status" value="1"/>
</dbReference>
<dbReference type="NCBIfam" id="NF002060">
    <property type="entry name" value="PRK00892.1"/>
    <property type="match status" value="1"/>
</dbReference>
<dbReference type="PANTHER" id="PTHR43378">
    <property type="entry name" value="UDP-3-O-ACYLGLUCOSAMINE N-ACYLTRANSFERASE"/>
    <property type="match status" value="1"/>
</dbReference>
<dbReference type="PANTHER" id="PTHR43378:SF2">
    <property type="entry name" value="UDP-3-O-ACYLGLUCOSAMINE N-ACYLTRANSFERASE 1, MITOCHONDRIAL-RELATED"/>
    <property type="match status" value="1"/>
</dbReference>
<dbReference type="Pfam" id="PF00132">
    <property type="entry name" value="Hexapep"/>
    <property type="match status" value="2"/>
</dbReference>
<dbReference type="Pfam" id="PF04613">
    <property type="entry name" value="LpxD"/>
    <property type="match status" value="1"/>
</dbReference>
<dbReference type="SUPFAM" id="SSF51161">
    <property type="entry name" value="Trimeric LpxA-like enzymes"/>
    <property type="match status" value="1"/>
</dbReference>
<dbReference type="PROSITE" id="PS00101">
    <property type="entry name" value="HEXAPEP_TRANSFERASES"/>
    <property type="match status" value="1"/>
</dbReference>